<protein>
    <recommendedName>
        <fullName evidence="1">DNA-directed RNA polymerase subunit beta</fullName>
        <shortName evidence="1">RNAP subunit beta</shortName>
        <ecNumber evidence="1">2.7.7.6</ecNumber>
    </recommendedName>
    <alternativeName>
        <fullName evidence="1">RNA polymerase subunit beta</fullName>
    </alternativeName>
    <alternativeName>
        <fullName evidence="1">Transcriptase subunit beta</fullName>
    </alternativeName>
</protein>
<organism>
    <name type="scientific">Enterococcus faecium</name>
    <name type="common">Streptococcus faecium</name>
    <dbReference type="NCBI Taxonomy" id="1352"/>
    <lineage>
        <taxon>Bacteria</taxon>
        <taxon>Bacillati</taxon>
        <taxon>Bacillota</taxon>
        <taxon>Bacilli</taxon>
        <taxon>Lactobacillales</taxon>
        <taxon>Enterococcaceae</taxon>
        <taxon>Enterococcus</taxon>
    </lineage>
</organism>
<proteinExistence type="inferred from homology"/>
<gene>
    <name evidence="1" type="primary">rpoB</name>
</gene>
<reference key="1">
    <citation type="submission" date="2002-10" db="EMBL/GenBank/DDBJ databases">
        <title>Rifampin resistance and its fitness cost in Enterococcus faecium.</title>
        <authorList>
            <person name="Enne V.I."/>
            <person name="Bennett P.M."/>
        </authorList>
    </citation>
    <scope>NUCLEOTIDE SEQUENCE [GENOMIC DNA]</scope>
    <source>
        <strain>343-3</strain>
    </source>
</reference>
<dbReference type="EC" id="2.7.7.6" evidence="1"/>
<dbReference type="EMBL" id="AY167138">
    <property type="protein sequence ID" value="AAO00728.1"/>
    <property type="molecule type" value="Genomic_DNA"/>
</dbReference>
<dbReference type="SMR" id="Q8GCR6"/>
<dbReference type="STRING" id="1352.AL014_12570"/>
<dbReference type="eggNOG" id="COG0085">
    <property type="taxonomic scope" value="Bacteria"/>
</dbReference>
<dbReference type="GO" id="GO:0000428">
    <property type="term" value="C:DNA-directed RNA polymerase complex"/>
    <property type="evidence" value="ECO:0007669"/>
    <property type="project" value="UniProtKB-KW"/>
</dbReference>
<dbReference type="GO" id="GO:0003677">
    <property type="term" value="F:DNA binding"/>
    <property type="evidence" value="ECO:0007669"/>
    <property type="project" value="UniProtKB-UniRule"/>
</dbReference>
<dbReference type="GO" id="GO:0003899">
    <property type="term" value="F:DNA-directed RNA polymerase activity"/>
    <property type="evidence" value="ECO:0007669"/>
    <property type="project" value="UniProtKB-UniRule"/>
</dbReference>
<dbReference type="GO" id="GO:0032549">
    <property type="term" value="F:ribonucleoside binding"/>
    <property type="evidence" value="ECO:0007669"/>
    <property type="project" value="InterPro"/>
</dbReference>
<dbReference type="GO" id="GO:0006351">
    <property type="term" value="P:DNA-templated transcription"/>
    <property type="evidence" value="ECO:0007669"/>
    <property type="project" value="UniProtKB-UniRule"/>
</dbReference>
<dbReference type="CDD" id="cd00653">
    <property type="entry name" value="RNA_pol_B_RPB2"/>
    <property type="match status" value="1"/>
</dbReference>
<dbReference type="FunFam" id="3.90.1800.10:FF:000001">
    <property type="entry name" value="DNA-directed RNA polymerase subunit beta"/>
    <property type="match status" value="1"/>
</dbReference>
<dbReference type="Gene3D" id="2.40.50.100">
    <property type="match status" value="1"/>
</dbReference>
<dbReference type="Gene3D" id="2.40.50.150">
    <property type="match status" value="1"/>
</dbReference>
<dbReference type="Gene3D" id="3.90.1100.10">
    <property type="match status" value="2"/>
</dbReference>
<dbReference type="Gene3D" id="2.30.150.10">
    <property type="entry name" value="DNA-directed RNA polymerase, beta subunit, external 1 domain"/>
    <property type="match status" value="1"/>
</dbReference>
<dbReference type="Gene3D" id="2.40.270.10">
    <property type="entry name" value="DNA-directed RNA polymerase, subunit 2, domain 6"/>
    <property type="match status" value="1"/>
</dbReference>
<dbReference type="Gene3D" id="3.90.1800.10">
    <property type="entry name" value="RNA polymerase alpha subunit dimerisation domain"/>
    <property type="match status" value="1"/>
</dbReference>
<dbReference type="Gene3D" id="3.90.1110.10">
    <property type="entry name" value="RNA polymerase Rpb2, domain 2"/>
    <property type="match status" value="1"/>
</dbReference>
<dbReference type="HAMAP" id="MF_01321">
    <property type="entry name" value="RNApol_bact_RpoB"/>
    <property type="match status" value="1"/>
</dbReference>
<dbReference type="InterPro" id="IPR042107">
    <property type="entry name" value="DNA-dir_RNA_pol_bsu_ext_1_sf"/>
</dbReference>
<dbReference type="InterPro" id="IPR019462">
    <property type="entry name" value="DNA-dir_RNA_pol_bsu_external_1"/>
</dbReference>
<dbReference type="InterPro" id="IPR015712">
    <property type="entry name" value="DNA-dir_RNA_pol_su2"/>
</dbReference>
<dbReference type="InterPro" id="IPR007120">
    <property type="entry name" value="DNA-dir_RNAP_su2_dom"/>
</dbReference>
<dbReference type="InterPro" id="IPR037033">
    <property type="entry name" value="DNA-dir_RNAP_su2_hyb_sf"/>
</dbReference>
<dbReference type="InterPro" id="IPR010243">
    <property type="entry name" value="RNA_pol_bsu_bac"/>
</dbReference>
<dbReference type="InterPro" id="IPR007121">
    <property type="entry name" value="RNA_pol_bsu_CS"/>
</dbReference>
<dbReference type="InterPro" id="IPR007644">
    <property type="entry name" value="RNA_pol_bsu_protrusion"/>
</dbReference>
<dbReference type="InterPro" id="IPR007642">
    <property type="entry name" value="RNA_pol_Rpb2_2"/>
</dbReference>
<dbReference type="InterPro" id="IPR037034">
    <property type="entry name" value="RNA_pol_Rpb2_2_sf"/>
</dbReference>
<dbReference type="InterPro" id="IPR007645">
    <property type="entry name" value="RNA_pol_Rpb2_3"/>
</dbReference>
<dbReference type="InterPro" id="IPR007641">
    <property type="entry name" value="RNA_pol_Rpb2_7"/>
</dbReference>
<dbReference type="InterPro" id="IPR014724">
    <property type="entry name" value="RNA_pol_RPB2_OB-fold"/>
</dbReference>
<dbReference type="NCBIfam" id="NF001616">
    <property type="entry name" value="PRK00405.1"/>
    <property type="match status" value="1"/>
</dbReference>
<dbReference type="NCBIfam" id="TIGR02013">
    <property type="entry name" value="rpoB"/>
    <property type="match status" value="1"/>
</dbReference>
<dbReference type="PANTHER" id="PTHR20856">
    <property type="entry name" value="DNA-DIRECTED RNA POLYMERASE I SUBUNIT 2"/>
    <property type="match status" value="1"/>
</dbReference>
<dbReference type="Pfam" id="PF04563">
    <property type="entry name" value="RNA_pol_Rpb2_1"/>
    <property type="match status" value="1"/>
</dbReference>
<dbReference type="Pfam" id="PF04561">
    <property type="entry name" value="RNA_pol_Rpb2_2"/>
    <property type="match status" value="2"/>
</dbReference>
<dbReference type="Pfam" id="PF04565">
    <property type="entry name" value="RNA_pol_Rpb2_3"/>
    <property type="match status" value="1"/>
</dbReference>
<dbReference type="Pfam" id="PF10385">
    <property type="entry name" value="RNA_pol_Rpb2_45"/>
    <property type="match status" value="1"/>
</dbReference>
<dbReference type="Pfam" id="PF00562">
    <property type="entry name" value="RNA_pol_Rpb2_6"/>
    <property type="match status" value="1"/>
</dbReference>
<dbReference type="Pfam" id="PF04560">
    <property type="entry name" value="RNA_pol_Rpb2_7"/>
    <property type="match status" value="1"/>
</dbReference>
<dbReference type="SUPFAM" id="SSF64484">
    <property type="entry name" value="beta and beta-prime subunits of DNA dependent RNA-polymerase"/>
    <property type="match status" value="1"/>
</dbReference>
<dbReference type="PROSITE" id="PS01166">
    <property type="entry name" value="RNA_POL_BETA"/>
    <property type="match status" value="1"/>
</dbReference>
<comment type="function">
    <text evidence="1">DNA-dependent RNA polymerase catalyzes the transcription of DNA into RNA using the four ribonucleoside triphosphates as substrates.</text>
</comment>
<comment type="catalytic activity">
    <reaction evidence="1">
        <text>RNA(n) + a ribonucleoside 5'-triphosphate = RNA(n+1) + diphosphate</text>
        <dbReference type="Rhea" id="RHEA:21248"/>
        <dbReference type="Rhea" id="RHEA-COMP:14527"/>
        <dbReference type="Rhea" id="RHEA-COMP:17342"/>
        <dbReference type="ChEBI" id="CHEBI:33019"/>
        <dbReference type="ChEBI" id="CHEBI:61557"/>
        <dbReference type="ChEBI" id="CHEBI:140395"/>
        <dbReference type="EC" id="2.7.7.6"/>
    </reaction>
</comment>
<comment type="subunit">
    <text evidence="1">The RNAP catalytic core consists of 2 alpha, 1 beta, 1 beta' and 1 omega subunit. When a sigma factor is associated with the core the holoenzyme is formed, which can initiate transcription.</text>
</comment>
<comment type="similarity">
    <text evidence="1">Belongs to the RNA polymerase beta chain family.</text>
</comment>
<accession>Q8GCR6</accession>
<name>RPOB1_ENTFC</name>
<keyword id="KW-0240">DNA-directed RNA polymerase</keyword>
<keyword id="KW-0548">Nucleotidyltransferase</keyword>
<keyword id="KW-0804">Transcription</keyword>
<keyword id="KW-0808">Transferase</keyword>
<sequence>MKSLAGHVVKYGKHRERRSFARISEVLELPNLIEIQTDSYQWFLDEGLREMFEDILPIDDFNGNLSLEFVDYELKEPKYTVAEARAHDANYSAPLHVTLRLTNRETGEIKAQEVFFGDFPLMTEQGTFIINGAERVIVSQLVRSPGVYFHGKVDKNGKEGFGSTVIPNRGAWLEMETDAKDISYVRIDRTRKIPLTVLVRALGFGSDDTIFEIFGDSETLRNTVEKDLHKNASDSRTEEGLKDVYERLRPGEPKTADSSRNLLNARFFDPKRYDLANVGRYKVNKKLDLKTRLLNLTLAETLVDPETGEIIVEKGTVLTHQVMETLAPFIDNGLNSGTYYPSEDGVVTDPMTVQVIKVFSPRDPEREVNVIGNGYPEAAVKTVRPADIIASMSYFLNLMEGIGNVDDIDHLGNRRIRSVGELLQNQFRIGLARMERVVRERMSIQDTETLTPQQLINIRPVVASIKEFFGSSQLSQFMDQTNPLGELTHKRRLSALGPGGLTRDRAGYEVRDVHYSHYGRMCPIETPEGPNIGLINSLSSYAKVNKFGFIETPYRRVDRETGRVTDQIDYLTADIEDHYIVAQANSPLNEDGTFAQDVVMARAQSENLEVSIDKVDYMDVSPKQVVAVATACIPFLENDDSNRALMGANMQRQAVPLINPQAPWVGTGMEYKSAHDSGAALLCKHDGVVEYVDASEIRVRRDNGALDKYDVTKFRRSNSGTSYNQRPIVHLGEKVEKGVTLADGPSMEQGEMALGQNVLVGFMTWEGYNYEDAIIMSRRLVKDDVYTSIHIEEYESEARDTKLGPEEITREIPNVGEDALKDLDEMGIIRIGAEVQDGDLLVGKVTPKGVTELSAEERLLHAIFGEKAREVRDTSLRVPHGGGGIVHDVKIFTREAGDELSPGVNMLVRVYIVQKRKIHEGDKMAGRHGNKGVVSRIMPEEDMPFLPDGTPIDIMLNPLGVPSRMNIGQVLELHLGMAARQLGIHVATPVFDGASDEDVWETVREAGMASDAKTVLYDGRTGEPFDGRVSVGVMYMIKLAHMVDDKLHARSIGPYSLVTQQPLGGKAQFGGQRFGEMEVWALEAYGAAYTLQEILTYKSDDVVGRVKTYEAIVKGEPIPKPGVPESFRVLVKELQSLGLDMRVLDIEETEIELRDMDDEDDDLITVDALTKFAEQQTAKELEKKAAEQVEDEKDDVIQNFETAEDNLD</sequence>
<evidence type="ECO:0000255" key="1">
    <source>
        <dbReference type="HAMAP-Rule" id="MF_01321"/>
    </source>
</evidence>
<evidence type="ECO:0000256" key="2">
    <source>
        <dbReference type="SAM" id="MobiDB-lite"/>
    </source>
</evidence>
<feature type="chain" id="PRO_0000047899" description="DNA-directed RNA polymerase subunit beta">
    <location>
        <begin position="1"/>
        <end position="1208"/>
    </location>
</feature>
<feature type="region of interest" description="Disordered" evidence="2">
    <location>
        <begin position="1182"/>
        <end position="1208"/>
    </location>
</feature>